<keyword id="KW-0067">ATP-binding</keyword>
<keyword id="KW-1003">Cell membrane</keyword>
<keyword id="KW-0406">Ion transport</keyword>
<keyword id="KW-0472">Membrane</keyword>
<keyword id="KW-0547">Nucleotide-binding</keyword>
<keyword id="KW-1185">Reference proteome</keyword>
<keyword id="KW-0813">Transport</keyword>
<evidence type="ECO:0000255" key="1">
    <source>
        <dbReference type="PROSITE-ProRule" id="PRU00434"/>
    </source>
</evidence>
<evidence type="ECO:0000269" key="2">
    <source>
    </source>
</evidence>
<evidence type="ECO:0000303" key="3">
    <source>
    </source>
</evidence>
<evidence type="ECO:0000305" key="4"/>
<evidence type="ECO:0000305" key="5">
    <source>
    </source>
</evidence>
<organism>
    <name type="scientific">Bacillus subtilis (strain 168)</name>
    <dbReference type="NCBI Taxonomy" id="224308"/>
    <lineage>
        <taxon>Bacteria</taxon>
        <taxon>Bacillati</taxon>
        <taxon>Bacillota</taxon>
        <taxon>Bacilli</taxon>
        <taxon>Bacillales</taxon>
        <taxon>Bacillaceae</taxon>
        <taxon>Bacillus</taxon>
    </lineage>
</organism>
<dbReference type="EMBL" id="AF008220">
    <property type="protein sequence ID" value="AAC00230.1"/>
    <property type="molecule type" value="Genomic_DNA"/>
</dbReference>
<dbReference type="EMBL" id="AL009126">
    <property type="protein sequence ID" value="CAB15054.1"/>
    <property type="molecule type" value="Genomic_DNA"/>
</dbReference>
<dbReference type="PIR" id="C69992">
    <property type="entry name" value="C69992"/>
</dbReference>
<dbReference type="RefSeq" id="NP_390954.1">
    <property type="nucleotide sequence ID" value="NC_000964.3"/>
</dbReference>
<dbReference type="RefSeq" id="WP_004398644.1">
    <property type="nucleotide sequence ID" value="NZ_OZ025638.1"/>
</dbReference>
<dbReference type="SMR" id="O34338"/>
<dbReference type="FunCoup" id="O34338">
    <property type="interactions" value="299"/>
</dbReference>
<dbReference type="STRING" id="224308.BSU30760"/>
<dbReference type="PaxDb" id="224308-BSU30760"/>
<dbReference type="EnsemblBacteria" id="CAB15054">
    <property type="protein sequence ID" value="CAB15054"/>
    <property type="gene ID" value="BSU_30760"/>
</dbReference>
<dbReference type="GeneID" id="937196"/>
<dbReference type="KEGG" id="bsu:BSU30760"/>
<dbReference type="PATRIC" id="fig|224308.179.peg.3334"/>
<dbReference type="eggNOG" id="COG1121">
    <property type="taxonomic scope" value="Bacteria"/>
</dbReference>
<dbReference type="InParanoid" id="O34338"/>
<dbReference type="OrthoDB" id="9806726at2"/>
<dbReference type="PhylomeDB" id="O34338"/>
<dbReference type="BioCyc" id="BSUB:BSU30760-MONOMER"/>
<dbReference type="Proteomes" id="UP000001570">
    <property type="component" value="Chromosome"/>
</dbReference>
<dbReference type="GO" id="GO:0043190">
    <property type="term" value="C:ATP-binding cassette (ABC) transporter complex"/>
    <property type="evidence" value="ECO:0000318"/>
    <property type="project" value="GO_Central"/>
</dbReference>
<dbReference type="GO" id="GO:0005524">
    <property type="term" value="F:ATP binding"/>
    <property type="evidence" value="ECO:0007669"/>
    <property type="project" value="UniProtKB-KW"/>
</dbReference>
<dbReference type="GO" id="GO:0016887">
    <property type="term" value="F:ATP hydrolysis activity"/>
    <property type="evidence" value="ECO:0007669"/>
    <property type="project" value="InterPro"/>
</dbReference>
<dbReference type="GO" id="GO:0042626">
    <property type="term" value="F:ATPase-coupled transmembrane transporter activity"/>
    <property type="evidence" value="ECO:0000318"/>
    <property type="project" value="GO_Central"/>
</dbReference>
<dbReference type="GO" id="GO:0006811">
    <property type="term" value="P:monoatomic ion transport"/>
    <property type="evidence" value="ECO:0007669"/>
    <property type="project" value="UniProtKB-KW"/>
</dbReference>
<dbReference type="CDD" id="cd03235">
    <property type="entry name" value="ABC_Metallic_Cations"/>
    <property type="match status" value="1"/>
</dbReference>
<dbReference type="FunFam" id="3.40.50.300:FF:000134">
    <property type="entry name" value="Iron-enterobactin ABC transporter ATP-binding protein"/>
    <property type="match status" value="1"/>
</dbReference>
<dbReference type="Gene3D" id="3.40.50.300">
    <property type="entry name" value="P-loop containing nucleotide triphosphate hydrolases"/>
    <property type="match status" value="1"/>
</dbReference>
<dbReference type="InterPro" id="IPR003593">
    <property type="entry name" value="AAA+_ATPase"/>
</dbReference>
<dbReference type="InterPro" id="IPR003439">
    <property type="entry name" value="ABC_transporter-like_ATP-bd"/>
</dbReference>
<dbReference type="InterPro" id="IPR017871">
    <property type="entry name" value="ABC_transporter-like_CS"/>
</dbReference>
<dbReference type="InterPro" id="IPR050153">
    <property type="entry name" value="Metal_Ion_Import_ABC"/>
</dbReference>
<dbReference type="InterPro" id="IPR027417">
    <property type="entry name" value="P-loop_NTPase"/>
</dbReference>
<dbReference type="PANTHER" id="PTHR42734:SF5">
    <property type="entry name" value="IRON TRANSPORT SYSTEM ATP-BINDING PROTEIN HI_0361-RELATED"/>
    <property type="match status" value="1"/>
</dbReference>
<dbReference type="PANTHER" id="PTHR42734">
    <property type="entry name" value="METAL TRANSPORT SYSTEM ATP-BINDING PROTEIN TM_0124-RELATED"/>
    <property type="match status" value="1"/>
</dbReference>
<dbReference type="Pfam" id="PF00005">
    <property type="entry name" value="ABC_tran"/>
    <property type="match status" value="1"/>
</dbReference>
<dbReference type="SMART" id="SM00382">
    <property type="entry name" value="AAA"/>
    <property type="match status" value="1"/>
</dbReference>
<dbReference type="SUPFAM" id="SSF52540">
    <property type="entry name" value="P-loop containing nucleoside triphosphate hydrolases"/>
    <property type="match status" value="1"/>
</dbReference>
<dbReference type="PROSITE" id="PS00211">
    <property type="entry name" value="ABC_TRANSPORTER_1"/>
    <property type="match status" value="1"/>
</dbReference>
<dbReference type="PROSITE" id="PS50893">
    <property type="entry name" value="ABC_TRANSPORTER_2"/>
    <property type="match status" value="1"/>
</dbReference>
<accession>O34338</accession>
<sequence length="250" mass="27881">MFPVELDNVTVAYHKKPVLQDISLQVPEGKLIGIIGPNGAGKSTLIKTILGLVPRASGDISIYGKDYKDQRTRIGYVPQRGSVDWDFPTSPLDVVLMGRYGRIGLLKRPKKADVEMAKAALTKVGMHDYAKRQISQLSGGQQQRVFLARALCQNADIYFMDEPFAGVDAATERAIMTLLAELKEKGKTVLVVHHDLQTAEDYFDWILLLHLRKIAFGPTENVFTIENLQKTYGGRLTFLKDKVLAEGHKE</sequence>
<gene>
    <name evidence="3" type="primary">mntB</name>
    <name type="synonym">ytgB</name>
    <name type="ordered locus">BSU30760</name>
</gene>
<comment type="function">
    <text evidence="5">Probably part of the ABC transporter complex MntABCD involved in manganese import. Probably responsible for energy coupling to the transport system.</text>
</comment>
<comment type="subunit">
    <text evidence="5">The complex is probably composed of two ATP-binding proteins (MntB), two transmembrane proteins (MntC and MntD) and a solute-binding protein (MntA).</text>
</comment>
<comment type="subcellular location">
    <subcellularLocation>
        <location evidence="4">Cell membrane</location>
        <topology evidence="4">Peripheral membrane protein</topology>
    </subcellularLocation>
</comment>
<comment type="induction">
    <text evidence="2">Repressed by MntR in the presence of manganese.</text>
</comment>
<comment type="similarity">
    <text evidence="4">Belongs to the ABC transporter superfamily.</text>
</comment>
<protein>
    <recommendedName>
        <fullName>Manganese transport system ATP-binding protein MntB</fullName>
    </recommendedName>
</protein>
<proteinExistence type="evidence at transcript level"/>
<name>MNTB_BACSU</name>
<feature type="chain" id="PRO_0000092524" description="Manganese transport system ATP-binding protein MntB">
    <location>
        <begin position="1"/>
        <end position="250"/>
    </location>
</feature>
<feature type="domain" description="ABC transporter" evidence="1">
    <location>
        <begin position="4"/>
        <end position="236"/>
    </location>
</feature>
<feature type="binding site" evidence="1">
    <location>
        <begin position="36"/>
        <end position="43"/>
    </location>
    <ligand>
        <name>ATP</name>
        <dbReference type="ChEBI" id="CHEBI:30616"/>
    </ligand>
</feature>
<reference key="1">
    <citation type="journal article" date="1997" name="Microbiology">
        <title>Sequencing and functional annotation of the Bacillus subtilis genes in the 200 kb rrnB-dnaB region.</title>
        <authorList>
            <person name="Lapidus A."/>
            <person name="Galleron N."/>
            <person name="Sorokin A."/>
            <person name="Ehrlich S.D."/>
        </authorList>
    </citation>
    <scope>NUCLEOTIDE SEQUENCE [GENOMIC DNA]</scope>
    <source>
        <strain>168</strain>
    </source>
</reference>
<reference key="2">
    <citation type="journal article" date="1997" name="Nature">
        <title>The complete genome sequence of the Gram-positive bacterium Bacillus subtilis.</title>
        <authorList>
            <person name="Kunst F."/>
            <person name="Ogasawara N."/>
            <person name="Moszer I."/>
            <person name="Albertini A.M."/>
            <person name="Alloni G."/>
            <person name="Azevedo V."/>
            <person name="Bertero M.G."/>
            <person name="Bessieres P."/>
            <person name="Bolotin A."/>
            <person name="Borchert S."/>
            <person name="Borriss R."/>
            <person name="Boursier L."/>
            <person name="Brans A."/>
            <person name="Braun M."/>
            <person name="Brignell S.C."/>
            <person name="Bron S."/>
            <person name="Brouillet S."/>
            <person name="Bruschi C.V."/>
            <person name="Caldwell B."/>
            <person name="Capuano V."/>
            <person name="Carter N.M."/>
            <person name="Choi S.-K."/>
            <person name="Codani J.-J."/>
            <person name="Connerton I.F."/>
            <person name="Cummings N.J."/>
            <person name="Daniel R.A."/>
            <person name="Denizot F."/>
            <person name="Devine K.M."/>
            <person name="Duesterhoeft A."/>
            <person name="Ehrlich S.D."/>
            <person name="Emmerson P.T."/>
            <person name="Entian K.-D."/>
            <person name="Errington J."/>
            <person name="Fabret C."/>
            <person name="Ferrari E."/>
            <person name="Foulger D."/>
            <person name="Fritz C."/>
            <person name="Fujita M."/>
            <person name="Fujita Y."/>
            <person name="Fuma S."/>
            <person name="Galizzi A."/>
            <person name="Galleron N."/>
            <person name="Ghim S.-Y."/>
            <person name="Glaser P."/>
            <person name="Goffeau A."/>
            <person name="Golightly E.J."/>
            <person name="Grandi G."/>
            <person name="Guiseppi G."/>
            <person name="Guy B.J."/>
            <person name="Haga K."/>
            <person name="Haiech J."/>
            <person name="Harwood C.R."/>
            <person name="Henaut A."/>
            <person name="Hilbert H."/>
            <person name="Holsappel S."/>
            <person name="Hosono S."/>
            <person name="Hullo M.-F."/>
            <person name="Itaya M."/>
            <person name="Jones L.-M."/>
            <person name="Joris B."/>
            <person name="Karamata D."/>
            <person name="Kasahara Y."/>
            <person name="Klaerr-Blanchard M."/>
            <person name="Klein C."/>
            <person name="Kobayashi Y."/>
            <person name="Koetter P."/>
            <person name="Koningstein G."/>
            <person name="Krogh S."/>
            <person name="Kumano M."/>
            <person name="Kurita K."/>
            <person name="Lapidus A."/>
            <person name="Lardinois S."/>
            <person name="Lauber J."/>
            <person name="Lazarevic V."/>
            <person name="Lee S.-M."/>
            <person name="Levine A."/>
            <person name="Liu H."/>
            <person name="Masuda S."/>
            <person name="Mauel C."/>
            <person name="Medigue C."/>
            <person name="Medina N."/>
            <person name="Mellado R.P."/>
            <person name="Mizuno M."/>
            <person name="Moestl D."/>
            <person name="Nakai S."/>
            <person name="Noback M."/>
            <person name="Noone D."/>
            <person name="O'Reilly M."/>
            <person name="Ogawa K."/>
            <person name="Ogiwara A."/>
            <person name="Oudega B."/>
            <person name="Park S.-H."/>
            <person name="Parro V."/>
            <person name="Pohl T.M."/>
            <person name="Portetelle D."/>
            <person name="Porwollik S."/>
            <person name="Prescott A.M."/>
            <person name="Presecan E."/>
            <person name="Pujic P."/>
            <person name="Purnelle B."/>
            <person name="Rapoport G."/>
            <person name="Rey M."/>
            <person name="Reynolds S."/>
            <person name="Rieger M."/>
            <person name="Rivolta C."/>
            <person name="Rocha E."/>
            <person name="Roche B."/>
            <person name="Rose M."/>
            <person name="Sadaie Y."/>
            <person name="Sato T."/>
            <person name="Scanlan E."/>
            <person name="Schleich S."/>
            <person name="Schroeter R."/>
            <person name="Scoffone F."/>
            <person name="Sekiguchi J."/>
            <person name="Sekowska A."/>
            <person name="Seror S.J."/>
            <person name="Serror P."/>
            <person name="Shin B.-S."/>
            <person name="Soldo B."/>
            <person name="Sorokin A."/>
            <person name="Tacconi E."/>
            <person name="Takagi T."/>
            <person name="Takahashi H."/>
            <person name="Takemaru K."/>
            <person name="Takeuchi M."/>
            <person name="Tamakoshi A."/>
            <person name="Tanaka T."/>
            <person name="Terpstra P."/>
            <person name="Tognoni A."/>
            <person name="Tosato V."/>
            <person name="Uchiyama S."/>
            <person name="Vandenbol M."/>
            <person name="Vannier F."/>
            <person name="Vassarotti A."/>
            <person name="Viari A."/>
            <person name="Wambutt R."/>
            <person name="Wedler E."/>
            <person name="Wedler H."/>
            <person name="Weitzenegger T."/>
            <person name="Winters P."/>
            <person name="Wipat A."/>
            <person name="Yamamoto H."/>
            <person name="Yamane K."/>
            <person name="Yasumoto K."/>
            <person name="Yata K."/>
            <person name="Yoshida K."/>
            <person name="Yoshikawa H.-F."/>
            <person name="Zumstein E."/>
            <person name="Yoshikawa H."/>
            <person name="Danchin A."/>
        </authorList>
    </citation>
    <scope>NUCLEOTIDE SEQUENCE [LARGE SCALE GENOMIC DNA]</scope>
    <source>
        <strain>168</strain>
    </source>
</reference>
<reference key="3">
    <citation type="journal article" date="2000" name="Mol. Microbiol.">
        <title>Manganese homeostasis in Bacillus subtilis is regulated by MntR, a bifunctional regulator related to the diphtheria toxin repressor family of proteins.</title>
        <authorList>
            <person name="Que Q."/>
            <person name="Helmann J.D."/>
        </authorList>
    </citation>
    <scope>POSSIBLE FUNCTION</scope>
</reference>
<reference key="4">
    <citation type="journal article" date="2003" name="Mol. Microbiol.">
        <title>The global transcriptional response of Bacillus subtilis to manganese involves the MntR, Fur, TnrA and sigmaB regulons.</title>
        <authorList>
            <person name="Guedon E."/>
            <person name="Moore C.M."/>
            <person name="Que Q."/>
            <person name="Wang T."/>
            <person name="Ye R.W."/>
            <person name="Helmann J.D."/>
        </authorList>
    </citation>
    <scope>INDUCTION</scope>
</reference>